<comment type="function">
    <text evidence="1">Transcription factor that binds DNA in a non-specific manner, yet also specifically recognizes the core sequence 5'-CAC[GA]TG-3'. Activates the transcription of growth-related genes.</text>
</comment>
<comment type="subunit">
    <text evidence="1">Efficient DNA binding requires dimerization with another bHLH protein. Binds DNA as a heterodimer with max (By similarity).</text>
</comment>
<comment type="subcellular location">
    <subcellularLocation>
        <location evidence="4">Nucleus</location>
    </subcellularLocation>
</comment>
<comment type="domain">
    <text evidence="1">The 9aaTAD motif is a transactivation domain present in a large number of yeast and animal transcription factors.</text>
</comment>
<keyword id="KW-0010">Activator</keyword>
<keyword id="KW-0238">DNA-binding</keyword>
<keyword id="KW-0325">Glycoprotein</keyword>
<keyword id="KW-0539">Nucleus</keyword>
<keyword id="KW-0656">Proto-oncogene</keyword>
<keyword id="KW-1185">Reference proteome</keyword>
<keyword id="KW-0804">Transcription</keyword>
<keyword id="KW-0805">Transcription regulation</keyword>
<reference evidence="5" key="1">
    <citation type="submission" date="2003-01" db="EMBL/GenBank/DDBJ databases">
        <authorList>
            <consortium name="NIH - Zebrafish Gene Collection (ZGC) project"/>
        </authorList>
    </citation>
    <scope>NUCLEOTIDE SEQUENCE [LARGE SCALE MRNA]</scope>
    <source>
        <strain evidence="5">AB</strain>
    </source>
</reference>
<protein>
    <recommendedName>
        <fullName>Transcriptional regulator Myc-B</fullName>
        <shortName>c-Myc-B</shortName>
    </recommendedName>
</protein>
<proteinExistence type="evidence at transcript level"/>
<feature type="chain" id="PRO_0000271254" description="Transcriptional regulator Myc-B">
    <location>
        <begin position="1"/>
        <end position="396"/>
    </location>
</feature>
<feature type="domain" description="bHLH" evidence="2">
    <location>
        <begin position="313"/>
        <end position="365"/>
    </location>
</feature>
<feature type="region of interest" description="Disordered" evidence="3">
    <location>
        <begin position="183"/>
        <end position="251"/>
    </location>
</feature>
<feature type="region of interest" description="Disordered" evidence="3">
    <location>
        <begin position="298"/>
        <end position="318"/>
    </location>
</feature>
<feature type="region of interest" description="Leucine-zipper">
    <location>
        <begin position="372"/>
        <end position="393"/>
    </location>
</feature>
<feature type="short sequence motif" description="9aaTAD" evidence="1">
    <location>
        <begin position="79"/>
        <end position="87"/>
    </location>
</feature>
<feature type="compositionally biased region" description="Low complexity" evidence="3">
    <location>
        <begin position="191"/>
        <end position="212"/>
    </location>
</feature>
<feature type="compositionally biased region" description="Acidic residues" evidence="3">
    <location>
        <begin position="213"/>
        <end position="230"/>
    </location>
</feature>
<feature type="compositionally biased region" description="Basic and acidic residues" evidence="3">
    <location>
        <begin position="233"/>
        <end position="244"/>
    </location>
</feature>
<feature type="glycosylation site" description="O-linked (GlcNAc) threonine" evidence="1">
    <location>
        <position position="56"/>
    </location>
</feature>
<gene>
    <name evidence="5" type="primary">mycb</name>
    <name type="ORF">zgc:55680</name>
</gene>
<dbReference type="EMBL" id="BC045424">
    <property type="protein sequence ID" value="AAH45424.1"/>
    <property type="molecule type" value="mRNA"/>
</dbReference>
<dbReference type="RefSeq" id="NP_956466.1">
    <property type="nucleotide sequence ID" value="NM_200172.1"/>
</dbReference>
<dbReference type="SMR" id="Q7ZVS9"/>
<dbReference type="FunCoup" id="Q7ZVS9">
    <property type="interactions" value="1137"/>
</dbReference>
<dbReference type="STRING" id="7955.ENSDARP00000010970"/>
<dbReference type="GlyCosmos" id="Q7ZVS9">
    <property type="glycosylation" value="1 site, No reported glycans"/>
</dbReference>
<dbReference type="PaxDb" id="7955-ENSDARP00000010970"/>
<dbReference type="Ensembl" id="ENSDART00000005143">
    <property type="protein sequence ID" value="ENSDARP00000010970"/>
    <property type="gene ID" value="ENSDARG00000007241"/>
</dbReference>
<dbReference type="GeneID" id="393141"/>
<dbReference type="KEGG" id="dre:393141"/>
<dbReference type="AGR" id="ZFIN:ZDB-GENE-040426-780"/>
<dbReference type="CTD" id="393141"/>
<dbReference type="ZFIN" id="ZDB-GENE-040426-780">
    <property type="gene designation" value="mycb"/>
</dbReference>
<dbReference type="eggNOG" id="KOG2483">
    <property type="taxonomic scope" value="Eukaryota"/>
</dbReference>
<dbReference type="HOGENOM" id="CLU_052560_0_0_1"/>
<dbReference type="InParanoid" id="Q7ZVS9"/>
<dbReference type="OMA" id="REPPNIT"/>
<dbReference type="OrthoDB" id="5964374at2759"/>
<dbReference type="PhylomeDB" id="Q7ZVS9"/>
<dbReference type="TreeFam" id="TF106001"/>
<dbReference type="Reactome" id="R-DRE-8866911">
    <property type="pathway name" value="TFAP2 (AP-2) family regulates transcription of cell cycle factors"/>
</dbReference>
<dbReference type="PRO" id="PR:Q7ZVS9"/>
<dbReference type="Proteomes" id="UP000000437">
    <property type="component" value="Chromosome 2"/>
</dbReference>
<dbReference type="Bgee" id="ENSDARG00000007241">
    <property type="expression patterns" value="Expressed in tail bud paraxial mesoderm and 40 other cell types or tissues"/>
</dbReference>
<dbReference type="ExpressionAtlas" id="Q7ZVS9">
    <property type="expression patterns" value="baseline and differential"/>
</dbReference>
<dbReference type="GO" id="GO:0005634">
    <property type="term" value="C:nucleus"/>
    <property type="evidence" value="ECO:0007669"/>
    <property type="project" value="UniProtKB-SubCell"/>
</dbReference>
<dbReference type="GO" id="GO:0000981">
    <property type="term" value="F:DNA-binding transcription factor activity, RNA polymerase II-specific"/>
    <property type="evidence" value="ECO:0000353"/>
    <property type="project" value="ZFIN"/>
</dbReference>
<dbReference type="GO" id="GO:0046983">
    <property type="term" value="F:protein dimerization activity"/>
    <property type="evidence" value="ECO:0007669"/>
    <property type="project" value="InterPro"/>
</dbReference>
<dbReference type="GO" id="GO:0000978">
    <property type="term" value="F:RNA polymerase II cis-regulatory region sequence-specific DNA binding"/>
    <property type="evidence" value="ECO:0000318"/>
    <property type="project" value="GO_Central"/>
</dbReference>
<dbReference type="GO" id="GO:0060216">
    <property type="term" value="P:definitive hemopoiesis"/>
    <property type="evidence" value="ECO:0000315"/>
    <property type="project" value="ZFIN"/>
</dbReference>
<dbReference type="GO" id="GO:0002244">
    <property type="term" value="P:hematopoietic progenitor cell differentiation"/>
    <property type="evidence" value="ECO:0000315"/>
    <property type="project" value="ZFIN"/>
</dbReference>
<dbReference type="GO" id="GO:0000122">
    <property type="term" value="P:negative regulation of transcription by RNA polymerase II"/>
    <property type="evidence" value="ECO:0000314"/>
    <property type="project" value="ZFIN"/>
</dbReference>
<dbReference type="GO" id="GO:0008284">
    <property type="term" value="P:positive regulation of cell population proliferation"/>
    <property type="evidence" value="ECO:0000318"/>
    <property type="project" value="GO_Central"/>
</dbReference>
<dbReference type="GO" id="GO:0045944">
    <property type="term" value="P:positive regulation of transcription by RNA polymerase II"/>
    <property type="evidence" value="ECO:0000314"/>
    <property type="project" value="ZFIN"/>
</dbReference>
<dbReference type="GO" id="GO:0006357">
    <property type="term" value="P:regulation of transcription by RNA polymerase II"/>
    <property type="evidence" value="ECO:0000318"/>
    <property type="project" value="GO_Central"/>
</dbReference>
<dbReference type="GO" id="GO:0042246">
    <property type="term" value="P:tissue regeneration"/>
    <property type="evidence" value="ECO:0000314"/>
    <property type="project" value="ZFIN"/>
</dbReference>
<dbReference type="CDD" id="cd11458">
    <property type="entry name" value="bHLHzip_c-Myc"/>
    <property type="match status" value="1"/>
</dbReference>
<dbReference type="FunFam" id="4.10.280.10:FF:000019">
    <property type="entry name" value="Myc proto-oncogene protein"/>
    <property type="match status" value="1"/>
</dbReference>
<dbReference type="Gene3D" id="4.10.280.10">
    <property type="entry name" value="Helix-loop-helix DNA-binding domain"/>
    <property type="match status" value="1"/>
</dbReference>
<dbReference type="InterPro" id="IPR011598">
    <property type="entry name" value="bHLH_dom"/>
</dbReference>
<dbReference type="InterPro" id="IPR036638">
    <property type="entry name" value="HLH_DNA-bd_sf"/>
</dbReference>
<dbReference type="InterPro" id="IPR003327">
    <property type="entry name" value="Myc-LZ"/>
</dbReference>
<dbReference type="InterPro" id="IPR050433">
    <property type="entry name" value="Myc_transcription_factors"/>
</dbReference>
<dbReference type="InterPro" id="IPR002418">
    <property type="entry name" value="Tscrpt_reg_Myc"/>
</dbReference>
<dbReference type="InterPro" id="IPR012682">
    <property type="entry name" value="Tscrpt_reg_Myc_N"/>
</dbReference>
<dbReference type="PANTHER" id="PTHR45851">
    <property type="entry name" value="MYC PROTO-ONCOGENE"/>
    <property type="match status" value="1"/>
</dbReference>
<dbReference type="Pfam" id="PF00010">
    <property type="entry name" value="HLH"/>
    <property type="match status" value="1"/>
</dbReference>
<dbReference type="Pfam" id="PF02344">
    <property type="entry name" value="Myc-LZ"/>
    <property type="match status" value="1"/>
</dbReference>
<dbReference type="Pfam" id="PF01056">
    <property type="entry name" value="Myc_N"/>
    <property type="match status" value="1"/>
</dbReference>
<dbReference type="PIRSF" id="PIRSF001705">
    <property type="entry name" value="Myc_protein"/>
    <property type="match status" value="1"/>
</dbReference>
<dbReference type="PRINTS" id="PR00044">
    <property type="entry name" value="LEUZIPPRMYC"/>
</dbReference>
<dbReference type="SMART" id="SM00353">
    <property type="entry name" value="HLH"/>
    <property type="match status" value="1"/>
</dbReference>
<dbReference type="SUPFAM" id="SSF47459">
    <property type="entry name" value="HLH, helix-loop-helix DNA-binding domain"/>
    <property type="match status" value="1"/>
</dbReference>
<dbReference type="PROSITE" id="PS50888">
    <property type="entry name" value="BHLH"/>
    <property type="match status" value="1"/>
</dbReference>
<name>MYCB_DANRE</name>
<accession>Q7ZVS9</accession>
<organism>
    <name type="scientific">Danio rerio</name>
    <name type="common">Zebrafish</name>
    <name type="synonym">Brachydanio rerio</name>
    <dbReference type="NCBI Taxonomy" id="7955"/>
    <lineage>
        <taxon>Eukaryota</taxon>
        <taxon>Metazoa</taxon>
        <taxon>Chordata</taxon>
        <taxon>Craniata</taxon>
        <taxon>Vertebrata</taxon>
        <taxon>Euteleostomi</taxon>
        <taxon>Actinopterygii</taxon>
        <taxon>Neopterygii</taxon>
        <taxon>Teleostei</taxon>
        <taxon>Ostariophysi</taxon>
        <taxon>Cypriniformes</taxon>
        <taxon>Danionidae</taxon>
        <taxon>Danioninae</taxon>
        <taxon>Danio</taxon>
    </lineage>
</organism>
<evidence type="ECO:0000250" key="1">
    <source>
        <dbReference type="UniProtKB" id="P01106"/>
    </source>
</evidence>
<evidence type="ECO:0000255" key="2">
    <source>
        <dbReference type="PROSITE-ProRule" id="PRU00981"/>
    </source>
</evidence>
<evidence type="ECO:0000256" key="3">
    <source>
        <dbReference type="SAM" id="MobiDB-lite"/>
    </source>
</evidence>
<evidence type="ECO:0000305" key="4"/>
<evidence type="ECO:0000312" key="5">
    <source>
        <dbReference type="EMBL" id="AAH45424.1"/>
    </source>
</evidence>
<sequence length="396" mass="44919">MPLNSSMECKNYDYDYDSYQPYFYFDNEDEDFYNHQHGQPPAPSEDIWKKFELLPTPPLSPSRRPSLSDPFPSTADKLEMVSEFLGDDVVNHSIICDADYSQSFLKSIIIQDCMWSGFSAAAKLEKVVSERLASLQAARKESSRTESADICRSVGFLQDMSTPASQCIDPSVVFPFPLTDSTKPCKPAPTPASTTLPLDTPPNSGSSSSSSDSESDDEDDEDEEEEEEIDVVTVEKRKSVKKSDANATHQSPVVLKRCHVNIHQHNYAAHPSTRNEQPAVKRIKFESHIRVFKQISHNRKCASPRTSDSEDNDKRRTHNVLERQRRNELKLSFFALRDVIPDVANNEKAAKVVILKKATECIASMQEDEQRLISLKEQLRRKCEHLKQRLEQLSCS</sequence>